<protein>
    <recommendedName>
        <fullName evidence="1">Small ribosomal subunit protein uS14c</fullName>
    </recommendedName>
    <alternativeName>
        <fullName evidence="2">30S ribosomal protein S14, chloroplastic</fullName>
    </alternativeName>
</protein>
<gene>
    <name evidence="1" type="primary">rps14</name>
</gene>
<proteinExistence type="inferred from homology"/>
<reference key="1">
    <citation type="journal article" date="2007" name="Mol. Biol. Evol.">
        <title>The complete chloroplast genome of the chlorarachniophyte Bigelowiella natans: evidence for independent origins of chlorarachniophyte and euglenid secondary endosymbionts.</title>
        <authorList>
            <person name="Rogers M.B."/>
            <person name="Gilson P.R."/>
            <person name="Su V."/>
            <person name="McFadden G.I."/>
            <person name="Keeling P.J."/>
        </authorList>
    </citation>
    <scope>NUCLEOTIDE SEQUENCE [LARGE SCALE GENOMIC DNA]</scope>
</reference>
<evidence type="ECO:0000255" key="1">
    <source>
        <dbReference type="HAMAP-Rule" id="MF_00537"/>
    </source>
</evidence>
<evidence type="ECO:0000305" key="2"/>
<feature type="chain" id="PRO_0000295909" description="Small ribosomal subunit protein uS14c">
    <location>
        <begin position="1"/>
        <end position="100"/>
    </location>
</feature>
<geneLocation type="chloroplast"/>
<keyword id="KW-0150">Chloroplast</keyword>
<keyword id="KW-0934">Plastid</keyword>
<keyword id="KW-0687">Ribonucleoprotein</keyword>
<keyword id="KW-0689">Ribosomal protein</keyword>
<keyword id="KW-0694">RNA-binding</keyword>
<keyword id="KW-0699">rRNA-binding</keyword>
<dbReference type="EMBL" id="DQ851108">
    <property type="protein sequence ID" value="ABG91444.1"/>
    <property type="molecule type" value="Genomic_DNA"/>
</dbReference>
<dbReference type="RefSeq" id="YP_778612.1">
    <property type="nucleotide sequence ID" value="NC_008408.1"/>
</dbReference>
<dbReference type="SMR" id="Q06J15"/>
<dbReference type="GeneID" id="4353029"/>
<dbReference type="GO" id="GO:0009507">
    <property type="term" value="C:chloroplast"/>
    <property type="evidence" value="ECO:0007669"/>
    <property type="project" value="UniProtKB-SubCell"/>
</dbReference>
<dbReference type="GO" id="GO:0015935">
    <property type="term" value="C:small ribosomal subunit"/>
    <property type="evidence" value="ECO:0007669"/>
    <property type="project" value="TreeGrafter"/>
</dbReference>
<dbReference type="GO" id="GO:0019843">
    <property type="term" value="F:rRNA binding"/>
    <property type="evidence" value="ECO:0007669"/>
    <property type="project" value="UniProtKB-UniRule"/>
</dbReference>
<dbReference type="GO" id="GO:0003735">
    <property type="term" value="F:structural constituent of ribosome"/>
    <property type="evidence" value="ECO:0007669"/>
    <property type="project" value="InterPro"/>
</dbReference>
<dbReference type="GO" id="GO:0006412">
    <property type="term" value="P:translation"/>
    <property type="evidence" value="ECO:0007669"/>
    <property type="project" value="UniProtKB-UniRule"/>
</dbReference>
<dbReference type="FunFam" id="1.10.287.1480:FF:000001">
    <property type="entry name" value="30S ribosomal protein S14"/>
    <property type="match status" value="1"/>
</dbReference>
<dbReference type="Gene3D" id="1.10.287.1480">
    <property type="match status" value="1"/>
</dbReference>
<dbReference type="HAMAP" id="MF_00537">
    <property type="entry name" value="Ribosomal_uS14_1"/>
    <property type="match status" value="1"/>
</dbReference>
<dbReference type="InterPro" id="IPR001209">
    <property type="entry name" value="Ribosomal_uS14"/>
</dbReference>
<dbReference type="InterPro" id="IPR023036">
    <property type="entry name" value="Ribosomal_uS14_bac/plastid"/>
</dbReference>
<dbReference type="InterPro" id="IPR018271">
    <property type="entry name" value="Ribosomal_uS14_CS"/>
</dbReference>
<dbReference type="NCBIfam" id="NF006477">
    <property type="entry name" value="PRK08881.1"/>
    <property type="match status" value="1"/>
</dbReference>
<dbReference type="PANTHER" id="PTHR19836">
    <property type="entry name" value="30S RIBOSOMAL PROTEIN S14"/>
    <property type="match status" value="1"/>
</dbReference>
<dbReference type="PANTHER" id="PTHR19836:SF19">
    <property type="entry name" value="SMALL RIBOSOMAL SUBUNIT PROTEIN US14M"/>
    <property type="match status" value="1"/>
</dbReference>
<dbReference type="Pfam" id="PF00253">
    <property type="entry name" value="Ribosomal_S14"/>
    <property type="match status" value="1"/>
</dbReference>
<dbReference type="SUPFAM" id="SSF57716">
    <property type="entry name" value="Glucocorticoid receptor-like (DNA-binding domain)"/>
    <property type="match status" value="1"/>
</dbReference>
<dbReference type="PROSITE" id="PS00527">
    <property type="entry name" value="RIBOSOMAL_S14"/>
    <property type="match status" value="1"/>
</dbReference>
<comment type="function">
    <text evidence="1">Binds 16S rRNA, required for the assembly of 30S particles.</text>
</comment>
<comment type="subunit">
    <text evidence="1">Part of the 30S ribosomal subunit.</text>
</comment>
<comment type="subcellular location">
    <subcellularLocation>
        <location>Plastid</location>
        <location>Chloroplast</location>
    </subcellularLocation>
</comment>
<comment type="similarity">
    <text evidence="1">Belongs to the universal ribosomal protein uS14 family.</text>
</comment>
<organism>
    <name type="scientific">Bigelowiella natans</name>
    <name type="common">Pedinomonas minutissima</name>
    <name type="synonym">Chlorarachnion sp. (strain CCMP621)</name>
    <dbReference type="NCBI Taxonomy" id="227086"/>
    <lineage>
        <taxon>Eukaryota</taxon>
        <taxon>Sar</taxon>
        <taxon>Rhizaria</taxon>
        <taxon>Cercozoa</taxon>
        <taxon>Chlorarachniophyceae</taxon>
        <taxon>Bigelowiella</taxon>
    </lineage>
</organism>
<sequence length="100" mass="11882">MAKKGMLEREKKRQNLVYKYNSRRQALKNSIKYSSSFSETSLLKKELEKLPLNSMKIRLRNRCFVTGKPRGFYRNFGLSRNMLRYMGHECLIPGLMKASW</sequence>
<name>RR14_BIGNA</name>
<accession>Q06J15</accession>